<accession>P62148</accession>
<accession>P07181</accession>
<accession>Q9V3T4</accession>
<keyword id="KW-0007">Acetylation</keyword>
<keyword id="KW-0106">Calcium</keyword>
<keyword id="KW-0479">Metal-binding</keyword>
<keyword id="KW-0488">Methylation</keyword>
<keyword id="KW-0677">Repeat</keyword>
<organism>
    <name type="scientific">Branchiostoma lanceolatum</name>
    <name type="common">Common lancelet</name>
    <name type="synonym">Amphioxus lanceolatum</name>
    <dbReference type="NCBI Taxonomy" id="7740"/>
    <lineage>
        <taxon>Eukaryota</taxon>
        <taxon>Metazoa</taxon>
        <taxon>Chordata</taxon>
        <taxon>Cephalochordata</taxon>
        <taxon>Leptocardii</taxon>
        <taxon>Amphioxiformes</taxon>
        <taxon>Branchiostomatidae</taxon>
        <taxon>Branchiostoma</taxon>
    </lineage>
</organism>
<feature type="initiator methionine" description="Removed" evidence="1">
    <location>
        <position position="1"/>
    </location>
</feature>
<feature type="chain" id="PRO_0000198248" description="Calmodulin-1">
    <location>
        <begin position="2"/>
        <end position="149"/>
    </location>
</feature>
<feature type="domain" description="EF-hand 1" evidence="2">
    <location>
        <begin position="8"/>
        <end position="43"/>
    </location>
</feature>
<feature type="domain" description="EF-hand 2" evidence="2">
    <location>
        <begin position="44"/>
        <end position="79"/>
    </location>
</feature>
<feature type="domain" description="EF-hand 3" evidence="2">
    <location>
        <begin position="81"/>
        <end position="116"/>
    </location>
</feature>
<feature type="domain" description="EF-hand 4" evidence="2">
    <location>
        <begin position="117"/>
        <end position="149"/>
    </location>
</feature>
<feature type="binding site" evidence="2">
    <location>
        <position position="21"/>
    </location>
    <ligand>
        <name>Ca(2+)</name>
        <dbReference type="ChEBI" id="CHEBI:29108"/>
        <label>1</label>
    </ligand>
</feature>
<feature type="binding site" evidence="2">
    <location>
        <position position="23"/>
    </location>
    <ligand>
        <name>Ca(2+)</name>
        <dbReference type="ChEBI" id="CHEBI:29108"/>
        <label>1</label>
    </ligand>
</feature>
<feature type="binding site" evidence="2">
    <location>
        <position position="25"/>
    </location>
    <ligand>
        <name>Ca(2+)</name>
        <dbReference type="ChEBI" id="CHEBI:29108"/>
        <label>1</label>
    </ligand>
</feature>
<feature type="binding site" evidence="2">
    <location>
        <position position="27"/>
    </location>
    <ligand>
        <name>Ca(2+)</name>
        <dbReference type="ChEBI" id="CHEBI:29108"/>
        <label>1</label>
    </ligand>
</feature>
<feature type="binding site" evidence="2">
    <location>
        <position position="32"/>
    </location>
    <ligand>
        <name>Ca(2+)</name>
        <dbReference type="ChEBI" id="CHEBI:29108"/>
        <label>1</label>
    </ligand>
</feature>
<feature type="binding site" evidence="2">
    <location>
        <position position="57"/>
    </location>
    <ligand>
        <name>Ca(2+)</name>
        <dbReference type="ChEBI" id="CHEBI:29108"/>
        <label>2</label>
    </ligand>
</feature>
<feature type="binding site" evidence="2">
    <location>
        <position position="59"/>
    </location>
    <ligand>
        <name>Ca(2+)</name>
        <dbReference type="ChEBI" id="CHEBI:29108"/>
        <label>2</label>
    </ligand>
</feature>
<feature type="binding site" evidence="2">
    <location>
        <position position="61"/>
    </location>
    <ligand>
        <name>Ca(2+)</name>
        <dbReference type="ChEBI" id="CHEBI:29108"/>
        <label>2</label>
    </ligand>
</feature>
<feature type="binding site" evidence="2">
    <location>
        <position position="63"/>
    </location>
    <ligand>
        <name>Ca(2+)</name>
        <dbReference type="ChEBI" id="CHEBI:29108"/>
        <label>2</label>
    </ligand>
</feature>
<feature type="binding site" evidence="2">
    <location>
        <position position="68"/>
    </location>
    <ligand>
        <name>Ca(2+)</name>
        <dbReference type="ChEBI" id="CHEBI:29108"/>
        <label>2</label>
    </ligand>
</feature>
<feature type="binding site" evidence="2">
    <location>
        <position position="94"/>
    </location>
    <ligand>
        <name>Ca(2+)</name>
        <dbReference type="ChEBI" id="CHEBI:29108"/>
        <label>3</label>
    </ligand>
</feature>
<feature type="binding site" evidence="2">
    <location>
        <position position="96"/>
    </location>
    <ligand>
        <name>Ca(2+)</name>
        <dbReference type="ChEBI" id="CHEBI:29108"/>
        <label>3</label>
    </ligand>
</feature>
<feature type="binding site" evidence="2">
    <location>
        <position position="98"/>
    </location>
    <ligand>
        <name>Ca(2+)</name>
        <dbReference type="ChEBI" id="CHEBI:29108"/>
        <label>3</label>
    </ligand>
</feature>
<feature type="binding site" evidence="2">
    <location>
        <position position="105"/>
    </location>
    <ligand>
        <name>Ca(2+)</name>
        <dbReference type="ChEBI" id="CHEBI:29108"/>
        <label>3</label>
    </ligand>
</feature>
<feature type="binding site" evidence="2">
    <location>
        <position position="130"/>
    </location>
    <ligand>
        <name>Ca(2+)</name>
        <dbReference type="ChEBI" id="CHEBI:29108"/>
        <label>4</label>
    </ligand>
</feature>
<feature type="binding site" evidence="2">
    <location>
        <position position="132"/>
    </location>
    <ligand>
        <name>Ca(2+)</name>
        <dbReference type="ChEBI" id="CHEBI:29108"/>
        <label>4</label>
    </ligand>
</feature>
<feature type="binding site" evidence="2">
    <location>
        <position position="134"/>
    </location>
    <ligand>
        <name>Ca(2+)</name>
        <dbReference type="ChEBI" id="CHEBI:29108"/>
        <label>4</label>
    </ligand>
</feature>
<feature type="binding site" evidence="2">
    <location>
        <position position="136"/>
    </location>
    <ligand>
        <name>Ca(2+)</name>
        <dbReference type="ChEBI" id="CHEBI:29108"/>
        <label>4</label>
    </ligand>
</feature>
<feature type="binding site" evidence="2">
    <location>
        <position position="141"/>
    </location>
    <ligand>
        <name>Ca(2+)</name>
        <dbReference type="ChEBI" id="CHEBI:29108"/>
        <label>4</label>
    </ligand>
</feature>
<feature type="modified residue" description="N-acetylalanine" evidence="1">
    <location>
        <position position="2"/>
    </location>
</feature>
<feature type="modified residue" description="N6,N6,N6-trimethyllysine" evidence="1">
    <location>
        <position position="116"/>
    </location>
</feature>
<dbReference type="EMBL" id="Y09880">
    <property type="protein sequence ID" value="CAA71006.1"/>
    <property type="molecule type" value="mRNA"/>
</dbReference>
<dbReference type="EMBL" id="AB003081">
    <property type="protein sequence ID" value="BAA19786.1"/>
    <property type="molecule type" value="mRNA"/>
</dbReference>
<dbReference type="SMR" id="P62148"/>
<dbReference type="OrthoDB" id="26525at2759"/>
<dbReference type="GO" id="GO:0016460">
    <property type="term" value="C:myosin II complex"/>
    <property type="evidence" value="ECO:0007669"/>
    <property type="project" value="TreeGrafter"/>
</dbReference>
<dbReference type="GO" id="GO:0005509">
    <property type="term" value="F:calcium ion binding"/>
    <property type="evidence" value="ECO:0007669"/>
    <property type="project" value="InterPro"/>
</dbReference>
<dbReference type="CDD" id="cd00051">
    <property type="entry name" value="EFh"/>
    <property type="match status" value="2"/>
</dbReference>
<dbReference type="FunFam" id="1.10.238.10:FF:000527">
    <property type="entry name" value="Calmodulin-3"/>
    <property type="match status" value="1"/>
</dbReference>
<dbReference type="Gene3D" id="1.10.238.10">
    <property type="entry name" value="EF-hand"/>
    <property type="match status" value="3"/>
</dbReference>
<dbReference type="InterPro" id="IPR050230">
    <property type="entry name" value="CALM/Myosin/TropC-like"/>
</dbReference>
<dbReference type="InterPro" id="IPR011992">
    <property type="entry name" value="EF-hand-dom_pair"/>
</dbReference>
<dbReference type="InterPro" id="IPR018247">
    <property type="entry name" value="EF_Hand_1_Ca_BS"/>
</dbReference>
<dbReference type="InterPro" id="IPR002048">
    <property type="entry name" value="EF_hand_dom"/>
</dbReference>
<dbReference type="PANTHER" id="PTHR23048:SF0">
    <property type="entry name" value="CALMODULIN LIKE 3"/>
    <property type="match status" value="1"/>
</dbReference>
<dbReference type="PANTHER" id="PTHR23048">
    <property type="entry name" value="MYOSIN LIGHT CHAIN 1, 3"/>
    <property type="match status" value="1"/>
</dbReference>
<dbReference type="Pfam" id="PF13499">
    <property type="entry name" value="EF-hand_7"/>
    <property type="match status" value="2"/>
</dbReference>
<dbReference type="SMART" id="SM00054">
    <property type="entry name" value="EFh"/>
    <property type="match status" value="4"/>
</dbReference>
<dbReference type="SUPFAM" id="SSF47473">
    <property type="entry name" value="EF-hand"/>
    <property type="match status" value="1"/>
</dbReference>
<dbReference type="PROSITE" id="PS00018">
    <property type="entry name" value="EF_HAND_1"/>
    <property type="match status" value="4"/>
</dbReference>
<dbReference type="PROSITE" id="PS50222">
    <property type="entry name" value="EF_HAND_2"/>
    <property type="match status" value="4"/>
</dbReference>
<comment type="function">
    <text>Calmodulin mediates the control of a large number of enzymes, ion channels and other proteins by Ca(2+). Among the enzymes to be stimulated by the calmodulin-Ca(2+) complex are a number of protein kinases and phosphatases.</text>
</comment>
<comment type="miscellaneous">
    <text evidence="1">This protein has four functional calcium-binding sites.</text>
</comment>
<comment type="similarity">
    <text evidence="3">Belongs to the calmodulin family.</text>
</comment>
<sequence length="149" mass="16811">MADQLTEEQIAEFKEAFSLFDKDGDGTITTKELGTVMRSLGQNPTEAELQDMINEVDADGNGTIDFPEFLTMMARKMKDTDSEEEIREAFRVFDKDGNGFISAAELRHVMTNLGEKLTDEEVDEMIREADIDGDGQVNYEEFVTMMTSK</sequence>
<protein>
    <recommendedName>
        <fullName>Calmodulin-1</fullName>
        <shortName>CaM 1</shortName>
    </recommendedName>
</protein>
<name>CALM1_BRALA</name>
<reference key="1">
    <citation type="journal article" date="1997" name="Gene">
        <title>The single calmodulin gene of the cephalochordate Branchiostoma.</title>
        <authorList>
            <person name="Karabinos A."/>
            <person name="Riemer D."/>
        </authorList>
    </citation>
    <scope>NUCLEOTIDE SEQUENCE [MRNA]</scope>
</reference>
<reference key="2">
    <citation type="submission" date="1997-04" db="EMBL/GenBank/DDBJ databases">
        <title>Primary structure of protochordate calmodulin.</title>
        <authorList>
            <person name="Yuasa H.J."/>
            <person name="Takagi T."/>
        </authorList>
    </citation>
    <scope>NUCLEOTIDE SEQUENCE [MRNA]</scope>
</reference>
<evidence type="ECO:0000250" key="1"/>
<evidence type="ECO:0000255" key="2">
    <source>
        <dbReference type="PROSITE-ProRule" id="PRU00448"/>
    </source>
</evidence>
<evidence type="ECO:0000305" key="3"/>
<proteinExistence type="evidence at transcript level"/>